<evidence type="ECO:0000255" key="1">
    <source>
        <dbReference type="PROSITE-ProRule" id="PRU00042"/>
    </source>
</evidence>
<evidence type="ECO:0000256" key="2">
    <source>
        <dbReference type="SAM" id="MobiDB-lite"/>
    </source>
</evidence>
<evidence type="ECO:0000269" key="3">
    <source>
    </source>
</evidence>
<evidence type="ECO:0000269" key="4">
    <source>
    </source>
</evidence>
<evidence type="ECO:0000269" key="5">
    <source>
    </source>
</evidence>
<evidence type="ECO:0000269" key="6">
    <source>
    </source>
</evidence>
<evidence type="ECO:0000269" key="7">
    <source>
    </source>
</evidence>
<evidence type="ECO:0000269" key="8">
    <source>
    </source>
</evidence>
<evidence type="ECO:0000269" key="9">
    <source>
    </source>
</evidence>
<evidence type="ECO:0000269" key="10">
    <source>
    </source>
</evidence>
<evidence type="ECO:0000269" key="11">
    <source>
    </source>
</evidence>
<evidence type="ECO:0000269" key="12">
    <source>
    </source>
</evidence>
<evidence type="ECO:0000269" key="13">
    <source>
    </source>
</evidence>
<evidence type="ECO:0000305" key="14"/>
<sequence>MLHEALMLEIYRQALNAGALPTARPRSTESANSSERCPSHDSNSSEHGGGAGSGGVGHRLDAAALSTGVMPGEGPTTLHSSFPAVPQSLPSQPPSMEAYLHMVAAAAQQYGFPLAAAAAAGAGPRLPLPLANEAAAPFKLPPQASPTASSNNSEALDFRTNLYGRAESAEPPASEGEEEEFDDGANNPLDLSVGTRKRGHESEPQLGHIQVKKMFKSDSPPANSVASPSASQLLPGVNPYLAAVAAANIFRAGQFPDWNSKNDLVVDPLEKMSDIVKGGASGMGTKEKMHSSKATTPQAASQPPKSPVQPTPNQNSESGGGSGGGAAGSGAVTKARHNIWQSHWQNKGVASSVFRCVWCKQSFPTLEALTTHMKDSKHCGVNVPPFGNLPSNNPQPQHHHPTPPPPPQNHNLRKHSSGSASNHSPSANVKNAFQYRGDPPTPLPRKLVRGQNVWLGKGVEQAMQILKCMRCGESFRSLGEMTKHMQETQHYTNILSQEQSISIKSGNANANSDAKESHNSLSSEESRTLSAVLTCKVCDKAFNSLGDLSNHMAKNNHYAEPLLQSAGARKRPAPKKREKSLPVRKLLEMKGGSGTTQEDHSNEKTSVQGKPGLGPGGGDKNDAALFAERMRQYITGVKAPEEIAKVAAAQLLAKNKSPELVEQKNGGSAKAAGASSVLSAIEQMFTTSFDTPPRHASLPASSPSNSSTKNTSPVASSILKRLGIDETVDYNKPLIDTNDPYYQHYRYTSSERSGSECSAEARPRLDAPTPEKQQQGGGHDEESSKPAIKQEREAESKPVKMEIKSEFVDEPNEAEETSKMEAAVVNGSATNNNNNIVERSSPKTPSSAASPQTRLLPPRSPAESQRSVTPKSPASSHKSYDGSSEGTKKFPSDSLNALSSMFDSLGSSGAGANSRAKLAAAAAAGGSESPENLTAGGNSLAALRQFCVKKEKTA</sequence>
<gene>
    <name type="primary">tsh</name>
    <name type="ORF">CG1374</name>
</gene>
<keyword id="KW-0010">Activator</keyword>
<keyword id="KW-0963">Cytoplasm</keyword>
<keyword id="KW-0217">Developmental protein</keyword>
<keyword id="KW-0238">DNA-binding</keyword>
<keyword id="KW-0479">Metal-binding</keyword>
<keyword id="KW-0539">Nucleus</keyword>
<keyword id="KW-0597">Phosphoprotein</keyword>
<keyword id="KW-1185">Reference proteome</keyword>
<keyword id="KW-0677">Repeat</keyword>
<keyword id="KW-0678">Repressor</keyword>
<keyword id="KW-0804">Transcription</keyword>
<keyword id="KW-0805">Transcription regulation</keyword>
<keyword id="KW-0879">Wnt signaling pathway</keyword>
<keyword id="KW-0862">Zinc</keyword>
<keyword id="KW-0863">Zinc-finger</keyword>
<organism>
    <name type="scientific">Drosophila melanogaster</name>
    <name type="common">Fruit fly</name>
    <dbReference type="NCBI Taxonomy" id="7227"/>
    <lineage>
        <taxon>Eukaryota</taxon>
        <taxon>Metazoa</taxon>
        <taxon>Ecdysozoa</taxon>
        <taxon>Arthropoda</taxon>
        <taxon>Hexapoda</taxon>
        <taxon>Insecta</taxon>
        <taxon>Pterygota</taxon>
        <taxon>Neoptera</taxon>
        <taxon>Endopterygota</taxon>
        <taxon>Diptera</taxon>
        <taxon>Brachycera</taxon>
        <taxon>Muscomorpha</taxon>
        <taxon>Ephydroidea</taxon>
        <taxon>Drosophilidae</taxon>
        <taxon>Drosophila</taxon>
        <taxon>Sophophora</taxon>
    </lineage>
</organism>
<dbReference type="EMBL" id="M57496">
    <property type="protein sequence ID" value="AAA28983.1"/>
    <property type="status" value="ALT_FRAME"/>
    <property type="molecule type" value="mRNA"/>
</dbReference>
<dbReference type="EMBL" id="AE014134">
    <property type="protein sequence ID" value="AAF57236.2"/>
    <property type="molecule type" value="Genomic_DNA"/>
</dbReference>
<dbReference type="EMBL" id="BT015201">
    <property type="protein sequence ID" value="AAT94430.1"/>
    <property type="status" value="ALT_FRAME"/>
    <property type="molecule type" value="mRNA"/>
</dbReference>
<dbReference type="EMBL" id="BT030762">
    <property type="protein sequence ID" value="ABV82144.1"/>
    <property type="molecule type" value="mRNA"/>
</dbReference>
<dbReference type="PIR" id="A38437">
    <property type="entry name" value="A38437"/>
</dbReference>
<dbReference type="RefSeq" id="NP_523615.2">
    <property type="nucleotide sequence ID" value="NM_078891.3"/>
</dbReference>
<dbReference type="BioGRID" id="61373">
    <property type="interactions" value="34"/>
</dbReference>
<dbReference type="FunCoup" id="P22265">
    <property type="interactions" value="100"/>
</dbReference>
<dbReference type="IntAct" id="P22265">
    <property type="interactions" value="5"/>
</dbReference>
<dbReference type="STRING" id="7227.FBpp0085261"/>
<dbReference type="GlyGen" id="P22265">
    <property type="glycosylation" value="1 site"/>
</dbReference>
<dbReference type="iPTMnet" id="P22265"/>
<dbReference type="PaxDb" id="7227-FBpp0085261"/>
<dbReference type="DNASU" id="35430"/>
<dbReference type="EnsemblMetazoa" id="FBtr0085906">
    <property type="protein sequence ID" value="FBpp0085261"/>
    <property type="gene ID" value="FBgn0003866"/>
</dbReference>
<dbReference type="GeneID" id="35430"/>
<dbReference type="KEGG" id="dme:Dmel_CG1374"/>
<dbReference type="AGR" id="FB:FBgn0003866"/>
<dbReference type="CTD" id="35430"/>
<dbReference type="FlyBase" id="FBgn0003866">
    <property type="gene designation" value="tsh"/>
</dbReference>
<dbReference type="VEuPathDB" id="VectorBase:FBgn0003866"/>
<dbReference type="eggNOG" id="ENOG502QV71">
    <property type="taxonomic scope" value="Eukaryota"/>
</dbReference>
<dbReference type="GeneTree" id="ENSGT00950000183051"/>
<dbReference type="HOGENOM" id="CLU_302525_0_0_1"/>
<dbReference type="InParanoid" id="P22265"/>
<dbReference type="OMA" id="CPSHDSN"/>
<dbReference type="OrthoDB" id="5815793at2759"/>
<dbReference type="PhylomeDB" id="P22265"/>
<dbReference type="Reactome" id="R-DME-390193">
    <property type="pathway name" value="Transcriptional activation by YKI"/>
</dbReference>
<dbReference type="SignaLink" id="P22265"/>
<dbReference type="BioGRID-ORCS" id="35430">
    <property type="hits" value="0 hits in 3 CRISPR screens"/>
</dbReference>
<dbReference type="GenomeRNAi" id="35430"/>
<dbReference type="PRO" id="PR:P22265"/>
<dbReference type="Proteomes" id="UP000000803">
    <property type="component" value="Chromosome 2L"/>
</dbReference>
<dbReference type="Bgee" id="FBgn0003866">
    <property type="expression patterns" value="Expressed in adult Malpighian tubule stellate cell of main segment in Malpighian tubule and 105 other cell types or tissues"/>
</dbReference>
<dbReference type="GO" id="GO:0005737">
    <property type="term" value="C:cytoplasm"/>
    <property type="evidence" value="ECO:0000314"/>
    <property type="project" value="UniProtKB"/>
</dbReference>
<dbReference type="GO" id="GO:0005654">
    <property type="term" value="C:nucleoplasm"/>
    <property type="evidence" value="ECO:0000304"/>
    <property type="project" value="Reactome"/>
</dbReference>
<dbReference type="GO" id="GO:0005634">
    <property type="term" value="C:nucleus"/>
    <property type="evidence" value="ECO:0000314"/>
    <property type="project" value="UniProtKB"/>
</dbReference>
<dbReference type="GO" id="GO:0003677">
    <property type="term" value="F:DNA binding"/>
    <property type="evidence" value="ECO:0000314"/>
    <property type="project" value="UniProtKB"/>
</dbReference>
<dbReference type="GO" id="GO:0000981">
    <property type="term" value="F:DNA-binding transcription factor activity, RNA polymerase II-specific"/>
    <property type="evidence" value="ECO:0000318"/>
    <property type="project" value="GO_Central"/>
</dbReference>
<dbReference type="GO" id="GO:0001227">
    <property type="term" value="F:DNA-binding transcription repressor activity, RNA polymerase II-specific"/>
    <property type="evidence" value="ECO:0000314"/>
    <property type="project" value="FlyBase"/>
</dbReference>
<dbReference type="GO" id="GO:0008270">
    <property type="term" value="F:zinc ion binding"/>
    <property type="evidence" value="ECO:0007669"/>
    <property type="project" value="UniProtKB-KW"/>
</dbReference>
<dbReference type="GO" id="GO:0048749">
    <property type="term" value="P:compound eye development"/>
    <property type="evidence" value="ECO:0000315"/>
    <property type="project" value="FlyBase"/>
</dbReference>
<dbReference type="GO" id="GO:0007450">
    <property type="term" value="P:dorsal/ventral pattern formation, imaginal disc"/>
    <property type="evidence" value="ECO:0000315"/>
    <property type="project" value="UniProtKB"/>
</dbReference>
<dbReference type="GO" id="GO:0048730">
    <property type="term" value="P:epidermis morphogenesis"/>
    <property type="evidence" value="ECO:0000315"/>
    <property type="project" value="FlyBase"/>
</dbReference>
<dbReference type="GO" id="GO:0035214">
    <property type="term" value="P:eye-antennal disc development"/>
    <property type="evidence" value="ECO:0000315"/>
    <property type="project" value="UniProtKB"/>
</dbReference>
<dbReference type="GO" id="GO:0008258">
    <property type="term" value="P:head involution"/>
    <property type="evidence" value="ECO:0000315"/>
    <property type="project" value="FlyBase"/>
</dbReference>
<dbReference type="GO" id="GO:0007476">
    <property type="term" value="P:imaginal disc-derived wing morphogenesis"/>
    <property type="evidence" value="ECO:0000315"/>
    <property type="project" value="FlyBase"/>
</dbReference>
<dbReference type="GO" id="GO:0007479">
    <property type="term" value="P:leg disc proximal/distal pattern formation"/>
    <property type="evidence" value="ECO:0000315"/>
    <property type="project" value="UniProtKB"/>
</dbReference>
<dbReference type="GO" id="GO:0061330">
    <property type="term" value="P:Malpighian tubule stellate cell differentiation"/>
    <property type="evidence" value="ECO:0000315"/>
    <property type="project" value="FlyBase"/>
</dbReference>
<dbReference type="GO" id="GO:0007494">
    <property type="term" value="P:midgut development"/>
    <property type="evidence" value="ECO:0000315"/>
    <property type="project" value="UniProtKB"/>
</dbReference>
<dbReference type="GO" id="GO:0045892">
    <property type="term" value="P:negative regulation of DNA-templated transcription"/>
    <property type="evidence" value="ECO:0000315"/>
    <property type="project" value="UniProtKB"/>
</dbReference>
<dbReference type="GO" id="GO:0045705">
    <property type="term" value="P:negative regulation of salivary gland boundary specification"/>
    <property type="evidence" value="ECO:0000304"/>
    <property type="project" value="FlyBase"/>
</dbReference>
<dbReference type="GO" id="GO:0000122">
    <property type="term" value="P:negative regulation of transcription by RNA polymerase II"/>
    <property type="evidence" value="ECO:0000315"/>
    <property type="project" value="UniProtKB"/>
</dbReference>
<dbReference type="GO" id="GO:2000497">
    <property type="term" value="P:positive regulation of cell proliferation involved in compound eye morphogenesis"/>
    <property type="evidence" value="ECO:0000315"/>
    <property type="project" value="FlyBase"/>
</dbReference>
<dbReference type="GO" id="GO:0045944">
    <property type="term" value="P:positive regulation of transcription by RNA polymerase II"/>
    <property type="evidence" value="ECO:0000315"/>
    <property type="project" value="FlyBase"/>
</dbReference>
<dbReference type="GO" id="GO:0006357">
    <property type="term" value="P:regulation of transcription by RNA polymerase II"/>
    <property type="evidence" value="ECO:0000315"/>
    <property type="project" value="FlyBase"/>
</dbReference>
<dbReference type="GO" id="GO:0007380">
    <property type="term" value="P:specification of segmental identity, head"/>
    <property type="evidence" value="ECO:0000315"/>
    <property type="project" value="FlyBase"/>
</dbReference>
<dbReference type="GO" id="GO:0007384">
    <property type="term" value="P:specification of segmental identity, thorax"/>
    <property type="evidence" value="ECO:0000315"/>
    <property type="project" value="FlyBase"/>
</dbReference>
<dbReference type="GO" id="GO:0035292">
    <property type="term" value="P:specification of segmental identity, trunk"/>
    <property type="evidence" value="ECO:0000315"/>
    <property type="project" value="UniProtKB"/>
</dbReference>
<dbReference type="GO" id="GO:0007473">
    <property type="term" value="P:wing disc proximal/distal pattern formation"/>
    <property type="evidence" value="ECO:0000315"/>
    <property type="project" value="UniProtKB"/>
</dbReference>
<dbReference type="GO" id="GO:0016055">
    <property type="term" value="P:Wnt signaling pathway"/>
    <property type="evidence" value="ECO:0000315"/>
    <property type="project" value="UniProtKB"/>
</dbReference>
<dbReference type="Gene3D" id="3.30.160.60">
    <property type="entry name" value="Classic Zinc Finger"/>
    <property type="match status" value="1"/>
</dbReference>
<dbReference type="InterPro" id="IPR027008">
    <property type="entry name" value="Teashirt_fam"/>
</dbReference>
<dbReference type="InterPro" id="IPR041661">
    <property type="entry name" value="ZN622/Rei1/Reh1_Znf-C2H2"/>
</dbReference>
<dbReference type="InterPro" id="IPR036236">
    <property type="entry name" value="Znf_C2H2_sf"/>
</dbReference>
<dbReference type="InterPro" id="IPR013087">
    <property type="entry name" value="Znf_C2H2_type"/>
</dbReference>
<dbReference type="PANTHER" id="PTHR12487:SF7">
    <property type="entry name" value="PROTEIN TEASHIRT-RELATED"/>
    <property type="match status" value="1"/>
</dbReference>
<dbReference type="PANTHER" id="PTHR12487">
    <property type="entry name" value="TEASHIRT-RELATED"/>
    <property type="match status" value="1"/>
</dbReference>
<dbReference type="Pfam" id="PF00096">
    <property type="entry name" value="zf-C2H2"/>
    <property type="match status" value="1"/>
</dbReference>
<dbReference type="Pfam" id="PF12756">
    <property type="entry name" value="zf-C2H2_2"/>
    <property type="match status" value="1"/>
</dbReference>
<dbReference type="SMART" id="SM00355">
    <property type="entry name" value="ZnF_C2H2"/>
    <property type="match status" value="3"/>
</dbReference>
<dbReference type="SUPFAM" id="SSF57667">
    <property type="entry name" value="beta-beta-alpha zinc fingers"/>
    <property type="match status" value="1"/>
</dbReference>
<dbReference type="PROSITE" id="PS00028">
    <property type="entry name" value="ZINC_FINGER_C2H2_1"/>
    <property type="match status" value="3"/>
</dbReference>
<dbReference type="PROSITE" id="PS50157">
    <property type="entry name" value="ZINC_FINGER_C2H2_2"/>
    <property type="match status" value="3"/>
</dbReference>
<feature type="chain" id="PRO_0000047061" description="Protein teashirt">
    <location>
        <begin position="1"/>
        <end position="954"/>
    </location>
</feature>
<feature type="zinc finger region" description="C2H2-type 1" evidence="1">
    <location>
        <begin position="354"/>
        <end position="378"/>
    </location>
</feature>
<feature type="zinc finger region" description="C2H2-type 2" evidence="1">
    <location>
        <begin position="466"/>
        <end position="490"/>
    </location>
</feature>
<feature type="zinc finger region" description="C2H2-type 3" evidence="1">
    <location>
        <begin position="533"/>
        <end position="557"/>
    </location>
</feature>
<feature type="region of interest" description="Disordered" evidence="2">
    <location>
        <begin position="20"/>
        <end position="91"/>
    </location>
</feature>
<feature type="region of interest" description="Disordered" evidence="2">
    <location>
        <begin position="167"/>
        <end position="207"/>
    </location>
</feature>
<feature type="region of interest" description="Disordered" evidence="2">
    <location>
        <begin position="276"/>
        <end position="331"/>
    </location>
</feature>
<feature type="region of interest" description="Disordered" evidence="2">
    <location>
        <begin position="383"/>
        <end position="444"/>
    </location>
</feature>
<feature type="region of interest" description="Disordered" evidence="2">
    <location>
        <begin position="563"/>
        <end position="622"/>
    </location>
</feature>
<feature type="region of interest" description="Disordered" evidence="2">
    <location>
        <begin position="689"/>
        <end position="714"/>
    </location>
</feature>
<feature type="region of interest" description="Disordered" evidence="2">
    <location>
        <begin position="748"/>
        <end position="935"/>
    </location>
</feature>
<feature type="compositionally biased region" description="Gly residues" evidence="2">
    <location>
        <begin position="47"/>
        <end position="57"/>
    </location>
</feature>
<feature type="compositionally biased region" description="Polar residues" evidence="2">
    <location>
        <begin position="292"/>
        <end position="303"/>
    </location>
</feature>
<feature type="compositionally biased region" description="Gly residues" evidence="2">
    <location>
        <begin position="318"/>
        <end position="328"/>
    </location>
</feature>
<feature type="compositionally biased region" description="Low complexity" evidence="2">
    <location>
        <begin position="417"/>
        <end position="428"/>
    </location>
</feature>
<feature type="compositionally biased region" description="Basic residues" evidence="2">
    <location>
        <begin position="568"/>
        <end position="578"/>
    </location>
</feature>
<feature type="compositionally biased region" description="Basic and acidic residues" evidence="2">
    <location>
        <begin position="579"/>
        <end position="588"/>
    </location>
</feature>
<feature type="compositionally biased region" description="Low complexity" evidence="2">
    <location>
        <begin position="696"/>
        <end position="712"/>
    </location>
</feature>
<feature type="compositionally biased region" description="Basic and acidic residues" evidence="2">
    <location>
        <begin position="778"/>
        <end position="807"/>
    </location>
</feature>
<feature type="compositionally biased region" description="Low complexity" evidence="2">
    <location>
        <begin position="842"/>
        <end position="851"/>
    </location>
</feature>
<feature type="compositionally biased region" description="Polar residues" evidence="2">
    <location>
        <begin position="862"/>
        <end position="885"/>
    </location>
</feature>
<feature type="compositionally biased region" description="Polar residues" evidence="2">
    <location>
        <begin position="893"/>
        <end position="907"/>
    </location>
</feature>
<feature type="compositionally biased region" description="Low complexity" evidence="2">
    <location>
        <begin position="910"/>
        <end position="926"/>
    </location>
</feature>
<feature type="modified residue" description="Phosphoserine" evidence="8">
    <location>
        <position position="750"/>
    </location>
</feature>
<feature type="modified residue" description="Phosphoserine" evidence="8">
    <location>
        <position position="758"/>
    </location>
</feature>
<feature type="sequence conflict" description="In Ref. 1; AAA28983." evidence="14" ref="1">
    <original>SAKAAG</original>
    <variation>QQRLR</variation>
    <location>
        <begin position="668"/>
        <end position="673"/>
    </location>
</feature>
<proteinExistence type="evidence at protein level"/>
<protein>
    <recommendedName>
        <fullName>Protein teashirt</fullName>
    </recommendedName>
</protein>
<comment type="function">
    <text evidence="3 5 6 7 9 10 11 13">Homeotic protein that acts downstream of Arm in the Wg cascade during embryogenesis to determine segment identity throughout the entire trunk. Acts cooperatively with other trunk homeotic proteins to repress head homeotic genes and therefore repress head segmental identity. Necessary, in combination with Scr, for the formation of the prothoracic segment. Promotes eye development in the dorsal region of the eye disk and suppresses eye development in the ventral region in combination with Wg-signaling and several early dorso-ventral eye patterning genes. Required for proper development of proximal leg segments. Has differential functions along the dorso-ventral axs of the antennal and leg disks. May play a role in wing hinge development. Possible involvement in chromatin structure for modulation of transcription. Binds DNA and can act as both a transcriptional repressor and activator. Positively regulates its own expression as well as that of Dll. Negatively regulates the expression of mod. Required for Wg-mediated transcriptional repression of Ubx in the midgut. Also represses transcription of lab in the midgut and is necessary for the proper formation of anterior and central midgut structures. Tiptop (tio) and teashirt (tsh) have, on the whole, common activities. Tio and tsh repress each other's expression and tsh has a crucial role for trunk patterning that is in part masked by ectopic expression of tiptop. Both genes share a common activity required for the activation of Ser and svb and the maintenance of en and wg.</text>
</comment>
<comment type="subunit">
    <text>Binds arm.</text>
</comment>
<comment type="subcellular location">
    <subcellularLocation>
        <location>Nucleus</location>
    </subcellularLocation>
    <subcellularLocation>
        <location>Cytoplasm</location>
    </subcellularLocation>
    <text>Initially localized in the cytoplasm soon after the blastoderm stage, and becomes nuclear by stage 9.</text>
</comment>
<comment type="tissue specificity">
    <text evidence="3 4 5 7 10 12">Shows a dynamic expression pattern during embryogenesis. Expressed in the embryonic trunk region (PS 3-13) with expression strongest in the thoracic segments. Expressed in a small group of cells corresponding to the anal tuft from stage 14. Strongly expressed in the embryonic ventral nerve cord. Also expressed in the proximal domain of the leg imaginal disk and in the region of the wing disk that will give rise to the proximal wing hinge. Expressed at high levels in the anterior and central embryonic midgut mesoderm and in the embryonic midgut endoderm. Expressed at a low level in more posterior visceral mesoderm of the gut. From stage 12 onwards, tsh and tio are colocalized in some cells of the CNS, trunk epidermis, hindgut and Malpighian tubules.</text>
</comment>
<comment type="developmental stage">
    <text>Expressed throughout embryonic, larval and adult development. Not maternally expressed.</text>
</comment>
<comment type="miscellaneous">
    <text>The tsh tio gene pair seems to have arisen from a recent duplication event: tsh has the dominant role compared to tio.</text>
</comment>
<comment type="similarity">
    <text evidence="14">Belongs to the teashirt C2H2-type zinc-finger protein family.</text>
</comment>
<comment type="sequence caution" evidence="14">
    <conflict type="frameshift">
        <sequence resource="EMBL-CDS" id="AAA28983"/>
    </conflict>
</comment>
<comment type="sequence caution" evidence="14">
    <conflict type="frameshift">
        <sequence resource="EMBL-CDS" id="AAT94430"/>
    </conflict>
</comment>
<name>TSH_DROME</name>
<reference key="1">
    <citation type="journal article" date="1991" name="Cell">
        <title>The gene teashirt is required for the development of Drosophila embryonic trunk segments and encodes a protein with widely spaced zinc finger motifs.</title>
        <authorList>
            <person name="Fasano L."/>
            <person name="Roeder L."/>
            <person name="Core N."/>
            <person name="Alexandre E."/>
            <person name="Vola C."/>
            <person name="Jacq B."/>
            <person name="Kerridge S."/>
        </authorList>
    </citation>
    <scope>NUCLEOTIDE SEQUENCE [MRNA]</scope>
    <scope>FUNCTION</scope>
</reference>
<reference key="2">
    <citation type="journal article" date="2000" name="Science">
        <title>The genome sequence of Drosophila melanogaster.</title>
        <authorList>
            <person name="Adams M.D."/>
            <person name="Celniker S.E."/>
            <person name="Holt R.A."/>
            <person name="Evans C.A."/>
            <person name="Gocayne J.D."/>
            <person name="Amanatides P.G."/>
            <person name="Scherer S.E."/>
            <person name="Li P.W."/>
            <person name="Hoskins R.A."/>
            <person name="Galle R.F."/>
            <person name="George R.A."/>
            <person name="Lewis S.E."/>
            <person name="Richards S."/>
            <person name="Ashburner M."/>
            <person name="Henderson S.N."/>
            <person name="Sutton G.G."/>
            <person name="Wortman J.R."/>
            <person name="Yandell M.D."/>
            <person name="Zhang Q."/>
            <person name="Chen L.X."/>
            <person name="Brandon R.C."/>
            <person name="Rogers Y.-H.C."/>
            <person name="Blazej R.G."/>
            <person name="Champe M."/>
            <person name="Pfeiffer B.D."/>
            <person name="Wan K.H."/>
            <person name="Doyle C."/>
            <person name="Baxter E.G."/>
            <person name="Helt G."/>
            <person name="Nelson C.R."/>
            <person name="Miklos G.L.G."/>
            <person name="Abril J.F."/>
            <person name="Agbayani A."/>
            <person name="An H.-J."/>
            <person name="Andrews-Pfannkoch C."/>
            <person name="Baldwin D."/>
            <person name="Ballew R.M."/>
            <person name="Basu A."/>
            <person name="Baxendale J."/>
            <person name="Bayraktaroglu L."/>
            <person name="Beasley E.M."/>
            <person name="Beeson K.Y."/>
            <person name="Benos P.V."/>
            <person name="Berman B.P."/>
            <person name="Bhandari D."/>
            <person name="Bolshakov S."/>
            <person name="Borkova D."/>
            <person name="Botchan M.R."/>
            <person name="Bouck J."/>
            <person name="Brokstein P."/>
            <person name="Brottier P."/>
            <person name="Burtis K.C."/>
            <person name="Busam D.A."/>
            <person name="Butler H."/>
            <person name="Cadieu E."/>
            <person name="Center A."/>
            <person name="Chandra I."/>
            <person name="Cherry J.M."/>
            <person name="Cawley S."/>
            <person name="Dahlke C."/>
            <person name="Davenport L.B."/>
            <person name="Davies P."/>
            <person name="de Pablos B."/>
            <person name="Delcher A."/>
            <person name="Deng Z."/>
            <person name="Mays A.D."/>
            <person name="Dew I."/>
            <person name="Dietz S.M."/>
            <person name="Dodson K."/>
            <person name="Doup L.E."/>
            <person name="Downes M."/>
            <person name="Dugan-Rocha S."/>
            <person name="Dunkov B.C."/>
            <person name="Dunn P."/>
            <person name="Durbin K.J."/>
            <person name="Evangelista C.C."/>
            <person name="Ferraz C."/>
            <person name="Ferriera S."/>
            <person name="Fleischmann W."/>
            <person name="Fosler C."/>
            <person name="Gabrielian A.E."/>
            <person name="Garg N.S."/>
            <person name="Gelbart W.M."/>
            <person name="Glasser K."/>
            <person name="Glodek A."/>
            <person name="Gong F."/>
            <person name="Gorrell J.H."/>
            <person name="Gu Z."/>
            <person name="Guan P."/>
            <person name="Harris M."/>
            <person name="Harris N.L."/>
            <person name="Harvey D.A."/>
            <person name="Heiman T.J."/>
            <person name="Hernandez J.R."/>
            <person name="Houck J."/>
            <person name="Hostin D."/>
            <person name="Houston K.A."/>
            <person name="Howland T.J."/>
            <person name="Wei M.-H."/>
            <person name="Ibegwam C."/>
            <person name="Jalali M."/>
            <person name="Kalush F."/>
            <person name="Karpen G.H."/>
            <person name="Ke Z."/>
            <person name="Kennison J.A."/>
            <person name="Ketchum K.A."/>
            <person name="Kimmel B.E."/>
            <person name="Kodira C.D."/>
            <person name="Kraft C.L."/>
            <person name="Kravitz S."/>
            <person name="Kulp D."/>
            <person name="Lai Z."/>
            <person name="Lasko P."/>
            <person name="Lei Y."/>
            <person name="Levitsky A.A."/>
            <person name="Li J.H."/>
            <person name="Li Z."/>
            <person name="Liang Y."/>
            <person name="Lin X."/>
            <person name="Liu X."/>
            <person name="Mattei B."/>
            <person name="McIntosh T.C."/>
            <person name="McLeod M.P."/>
            <person name="McPherson D."/>
            <person name="Merkulov G."/>
            <person name="Milshina N.V."/>
            <person name="Mobarry C."/>
            <person name="Morris J."/>
            <person name="Moshrefi A."/>
            <person name="Mount S.M."/>
            <person name="Moy M."/>
            <person name="Murphy B."/>
            <person name="Murphy L."/>
            <person name="Muzny D.M."/>
            <person name="Nelson D.L."/>
            <person name="Nelson D.R."/>
            <person name="Nelson K.A."/>
            <person name="Nixon K."/>
            <person name="Nusskern D.R."/>
            <person name="Pacleb J.M."/>
            <person name="Palazzolo M."/>
            <person name="Pittman G.S."/>
            <person name="Pan S."/>
            <person name="Pollard J."/>
            <person name="Puri V."/>
            <person name="Reese M.G."/>
            <person name="Reinert K."/>
            <person name="Remington K."/>
            <person name="Saunders R.D.C."/>
            <person name="Scheeler F."/>
            <person name="Shen H."/>
            <person name="Shue B.C."/>
            <person name="Siden-Kiamos I."/>
            <person name="Simpson M."/>
            <person name="Skupski M.P."/>
            <person name="Smith T.J."/>
            <person name="Spier E."/>
            <person name="Spradling A.C."/>
            <person name="Stapleton M."/>
            <person name="Strong R."/>
            <person name="Sun E."/>
            <person name="Svirskas R."/>
            <person name="Tector C."/>
            <person name="Turner R."/>
            <person name="Venter E."/>
            <person name="Wang A.H."/>
            <person name="Wang X."/>
            <person name="Wang Z.-Y."/>
            <person name="Wassarman D.A."/>
            <person name="Weinstock G.M."/>
            <person name="Weissenbach J."/>
            <person name="Williams S.M."/>
            <person name="Woodage T."/>
            <person name="Worley K.C."/>
            <person name="Wu D."/>
            <person name="Yang S."/>
            <person name="Yao Q.A."/>
            <person name="Ye J."/>
            <person name="Yeh R.-F."/>
            <person name="Zaveri J.S."/>
            <person name="Zhan M."/>
            <person name="Zhang G."/>
            <person name="Zhao Q."/>
            <person name="Zheng L."/>
            <person name="Zheng X.H."/>
            <person name="Zhong F.N."/>
            <person name="Zhong W."/>
            <person name="Zhou X."/>
            <person name="Zhu S.C."/>
            <person name="Zhu X."/>
            <person name="Smith H.O."/>
            <person name="Gibbs R.A."/>
            <person name="Myers E.W."/>
            <person name="Rubin G.M."/>
            <person name="Venter J.C."/>
        </authorList>
    </citation>
    <scope>NUCLEOTIDE SEQUENCE [LARGE SCALE GENOMIC DNA]</scope>
    <source>
        <strain>Berkeley</strain>
    </source>
</reference>
<reference key="3">
    <citation type="journal article" date="2002" name="Genome Biol.">
        <title>Annotation of the Drosophila melanogaster euchromatic genome: a systematic review.</title>
        <authorList>
            <person name="Misra S."/>
            <person name="Crosby M.A."/>
            <person name="Mungall C.J."/>
            <person name="Matthews B.B."/>
            <person name="Campbell K.S."/>
            <person name="Hradecky P."/>
            <person name="Huang Y."/>
            <person name="Kaminker J.S."/>
            <person name="Millburn G.H."/>
            <person name="Prochnik S.E."/>
            <person name="Smith C.D."/>
            <person name="Tupy J.L."/>
            <person name="Whitfield E.J."/>
            <person name="Bayraktaroglu L."/>
            <person name="Berman B.P."/>
            <person name="Bettencourt B.R."/>
            <person name="Celniker S.E."/>
            <person name="de Grey A.D.N.J."/>
            <person name="Drysdale R.A."/>
            <person name="Harris N.L."/>
            <person name="Richter J."/>
            <person name="Russo S."/>
            <person name="Schroeder A.J."/>
            <person name="Shu S.Q."/>
            <person name="Stapleton M."/>
            <person name="Yamada C."/>
            <person name="Ashburner M."/>
            <person name="Gelbart W.M."/>
            <person name="Rubin G.M."/>
            <person name="Lewis S.E."/>
        </authorList>
    </citation>
    <scope>GENOME REANNOTATION</scope>
    <source>
        <strain>Berkeley</strain>
    </source>
</reference>
<reference key="4">
    <citation type="submission" date="2007-10" db="EMBL/GenBank/DDBJ databases">
        <authorList>
            <person name="Stapleton M."/>
            <person name="Carlson J.W."/>
            <person name="Chavez C."/>
            <person name="Frise E."/>
            <person name="George R.A."/>
            <person name="Kapadia B."/>
            <person name="Pacleb J.M."/>
            <person name="Park S."/>
            <person name="Wan K.H."/>
            <person name="Yu C."/>
            <person name="Rubin G.M."/>
            <person name="Celniker S.E."/>
        </authorList>
    </citation>
    <scope>NUCLEOTIDE SEQUENCE [LARGE SCALE MRNA]</scope>
    <source>
        <strain>Berkeley</strain>
        <tissue>Embryo</tissue>
    </source>
</reference>
<reference key="5">
    <citation type="journal article" date="1992" name="Development">
        <title>The role of the teashirt gene in trunk segmental identity in Drosophila.</title>
        <authorList>
            <person name="Roeder L."/>
            <person name="Vola C."/>
            <person name="Kerridge S."/>
        </authorList>
    </citation>
    <scope>FUNCTION</scope>
    <scope>TISSUE SPECIFICITY</scope>
</reference>
<reference key="6">
    <citation type="journal article" date="1994" name="Development">
        <title>Homeotic complex and teashirt genes co-operate to establish trunk segmental identities in Drosophila.</title>
        <authorList>
            <person name="de Zulueta P."/>
            <person name="Alexandre E."/>
            <person name="Jacq B."/>
            <person name="Kerridge S."/>
        </authorList>
    </citation>
    <scope>FUNCTION</scope>
</reference>
<reference key="7">
    <citation type="journal article" date="1994" name="Development">
        <title>Role of the teashirt gene in Drosophila midgut morphogenesis: secreted proteins mediate the action of homeotic genes.</title>
        <authorList>
            <person name="Mathies L.D."/>
            <person name="Kerridge S."/>
            <person name="Scott M.P."/>
        </authorList>
    </citation>
    <scope>FUNCTION</scope>
    <scope>TISSUE SPECIFICITY</scope>
</reference>
<reference key="8">
    <citation type="journal article" date="1996" name="Mech. Dev.">
        <title>The Drosophila teashirt homeotic protein is a DNA-binding protein and modulo, a HOM-C regulated modifier of variegation, is a likely candidate for being a direct target gene.</title>
        <authorList>
            <person name="Alexandre E."/>
            <person name="Graba Y."/>
            <person name="Fasano L."/>
            <person name="Gallet A."/>
            <person name="Perrin L."/>
            <person name="De Zulueta P."/>
            <person name="Pradel J."/>
            <person name="Kerridge S."/>
            <person name="Jacq B."/>
        </authorList>
    </citation>
    <scope>DNA-BINDING</scope>
    <scope>SUBCELLULAR LOCATION</scope>
    <scope>TISSUE SPECIFICITY</scope>
</reference>
<reference key="9">
    <citation type="journal article" date="1998" name="Curr. Biol.">
        <title>Trunk-specific modulation of wingless signalling in Drosophila by teashirt binding to armadillo.</title>
        <authorList>
            <person name="Gallet A."/>
            <person name="Erkner A."/>
            <person name="Charroux B."/>
            <person name="Fasano L."/>
            <person name="Kerridge S."/>
        </authorList>
    </citation>
    <scope>FUNCTION</scope>
    <scope>INTERACTION WITH ARM</scope>
    <scope>SUBCELLULAR LOCATION</scope>
</reference>
<reference key="10">
    <citation type="journal article" date="2000" name="Mech. Dev.">
        <title>Proximal distal axis formation in the Drosophila leg: distinct functions of teashirt and homothorax in the proximal leg.</title>
        <authorList>
            <person name="Wu J."/>
            <person name="Cohen S.M."/>
        </authorList>
    </citation>
    <scope>FUNCTION</scope>
    <scope>TISSUE SPECIFICITY</scope>
</reference>
<reference key="11">
    <citation type="journal article" date="2001" name="Mech. Dev.">
        <title>Identification of a regulatory allele of teashirt (tsh) in Drosophila melanogaster that affects wing hinge development. An adult-specific tsh enhancer in Drosophila.</title>
        <authorList>
            <person name="Soanes K.H."/>
            <person name="MacKay J.O."/>
            <person name="Core N."/>
            <person name="Heslip T."/>
            <person name="Kerridge S."/>
            <person name="Bell J.B."/>
        </authorList>
    </citation>
    <scope>POSSIBLE FUNCTION</scope>
    <scope>TISSUE SPECIFICITY</scope>
</reference>
<reference key="12">
    <citation type="journal article" date="2004" name="Mech. Dev.">
        <title>Dorso-ventral asymmetric functions of teashirt in Drosophila eye development depend on spatial cues provided by early DV patterning genes.</title>
        <authorList>
            <person name="Singh A."/>
            <person name="Kango-Singh M."/>
            <person name="Choi K.W."/>
            <person name="Sun Y.H."/>
        </authorList>
    </citation>
    <scope>FUNCTION</scope>
</reference>
<reference key="13">
    <citation type="journal article" date="2005" name="Dev. Biol.">
        <title>A critical role of teashirt for patterning the ventral epidermis is masked by ectopic expression of tiptop, a paralog of teashirt in Drosophila.</title>
        <authorList>
            <person name="Laugier E."/>
            <person name="Yang Z."/>
            <person name="Fasano L."/>
            <person name="Kerridge S."/>
            <person name="Vola C."/>
        </authorList>
    </citation>
    <scope>FUNCTION</scope>
    <scope>TISSUE SPECIFICITY</scope>
</reference>
<reference key="14">
    <citation type="journal article" date="2008" name="J. Proteome Res.">
        <title>Phosphoproteome analysis of Drosophila melanogaster embryos.</title>
        <authorList>
            <person name="Zhai B."/>
            <person name="Villen J."/>
            <person name="Beausoleil S.A."/>
            <person name="Mintseris J."/>
            <person name="Gygi S.P."/>
        </authorList>
    </citation>
    <scope>PHOSPHORYLATION [LARGE SCALE ANALYSIS] AT SER-750 AND SER-758</scope>
    <scope>IDENTIFICATION BY MASS SPECTROMETRY</scope>
    <source>
        <tissue>Embryo</tissue>
    </source>
</reference>
<accession>P22265</accession>
<accession>A8E6H0</accession>
<accession>Q6AWP7</accession>
<accession>Q7KRS3</accession>
<accession>Q9V9Q0</accession>